<comment type="function">
    <text evidence="1">Participates in cysteine desulfuration mediated by SufS. Cysteine desulfuration mobilizes sulfur from L-cysteine to yield L-alanine and constitutes an essential step in sulfur metabolism for biosynthesis of a variety of sulfur-containing biomolecules. Functions as a sulfur acceptor for SufS, by mediating the direct transfer of the sulfur atom from the S-sulfanylcysteine of SufS, an intermediate product of cysteine desulfuration process.</text>
</comment>
<comment type="pathway">
    <text evidence="1">Cofactor biosynthesis; iron-sulfur cluster biosynthesis.</text>
</comment>
<comment type="subunit">
    <text evidence="1">Homodimer. Interacts with SufS.</text>
</comment>
<comment type="subcellular location">
    <subcellularLocation>
        <location evidence="1">Cytoplasm</location>
    </subcellularLocation>
</comment>
<comment type="similarity">
    <text evidence="1">Belongs to the SufE family.</text>
</comment>
<protein>
    <recommendedName>
        <fullName evidence="1">Cysteine desulfuration protein SufE</fullName>
    </recommendedName>
</protein>
<keyword id="KW-0963">Cytoplasm</keyword>
<proteinExistence type="inferred from homology"/>
<dbReference type="EMBL" id="AM933173">
    <property type="protein sequence ID" value="CAR37601.1"/>
    <property type="molecule type" value="Genomic_DNA"/>
</dbReference>
<dbReference type="RefSeq" id="WP_000729468.1">
    <property type="nucleotide sequence ID" value="NC_011274.1"/>
</dbReference>
<dbReference type="SMR" id="B5RAT3"/>
<dbReference type="KEGG" id="seg:SG1743"/>
<dbReference type="HOGENOM" id="CLU_124502_1_1_6"/>
<dbReference type="UniPathway" id="UPA00266"/>
<dbReference type="Proteomes" id="UP000008321">
    <property type="component" value="Chromosome"/>
</dbReference>
<dbReference type="GO" id="GO:0005737">
    <property type="term" value="C:cytoplasm"/>
    <property type="evidence" value="ECO:0007669"/>
    <property type="project" value="UniProtKB-SubCell"/>
</dbReference>
<dbReference type="GO" id="GO:0016226">
    <property type="term" value="P:iron-sulfur cluster assembly"/>
    <property type="evidence" value="ECO:0007669"/>
    <property type="project" value="InterPro"/>
</dbReference>
<dbReference type="GO" id="GO:0006790">
    <property type="term" value="P:sulfur compound metabolic process"/>
    <property type="evidence" value="ECO:0007669"/>
    <property type="project" value="InterPro"/>
</dbReference>
<dbReference type="Gene3D" id="3.90.1010.10">
    <property type="match status" value="1"/>
</dbReference>
<dbReference type="HAMAP" id="MF_01832">
    <property type="entry name" value="SufE"/>
    <property type="match status" value="1"/>
</dbReference>
<dbReference type="InterPro" id="IPR023939">
    <property type="entry name" value="Cysteine_desulfuration_SufE"/>
</dbReference>
<dbReference type="InterPro" id="IPR003808">
    <property type="entry name" value="Fe-S_metab-assoc_dom"/>
</dbReference>
<dbReference type="NCBIfam" id="NF006792">
    <property type="entry name" value="PRK09296.1"/>
    <property type="match status" value="1"/>
</dbReference>
<dbReference type="PANTHER" id="PTHR43597:SF3">
    <property type="entry name" value="CYSTEINE DESULFURATION PROTEIN SUFE"/>
    <property type="match status" value="1"/>
</dbReference>
<dbReference type="PANTHER" id="PTHR43597">
    <property type="entry name" value="SULFUR ACCEPTOR PROTEIN CSDE"/>
    <property type="match status" value="1"/>
</dbReference>
<dbReference type="Pfam" id="PF02657">
    <property type="entry name" value="SufE"/>
    <property type="match status" value="1"/>
</dbReference>
<dbReference type="SUPFAM" id="SSF82649">
    <property type="entry name" value="SufE/NifU"/>
    <property type="match status" value="1"/>
</dbReference>
<name>SUFE_SALG2</name>
<reference key="1">
    <citation type="journal article" date="2008" name="Genome Res.">
        <title>Comparative genome analysis of Salmonella enteritidis PT4 and Salmonella gallinarum 287/91 provides insights into evolutionary and host adaptation pathways.</title>
        <authorList>
            <person name="Thomson N.R."/>
            <person name="Clayton D.J."/>
            <person name="Windhorst D."/>
            <person name="Vernikos G."/>
            <person name="Davidson S."/>
            <person name="Churcher C."/>
            <person name="Quail M.A."/>
            <person name="Stevens M."/>
            <person name="Jones M.A."/>
            <person name="Watson M."/>
            <person name="Barron A."/>
            <person name="Layton A."/>
            <person name="Pickard D."/>
            <person name="Kingsley R.A."/>
            <person name="Bignell A."/>
            <person name="Clark L."/>
            <person name="Harris B."/>
            <person name="Ormond D."/>
            <person name="Abdellah Z."/>
            <person name="Brooks K."/>
            <person name="Cherevach I."/>
            <person name="Chillingworth T."/>
            <person name="Woodward J."/>
            <person name="Norberczak H."/>
            <person name="Lord A."/>
            <person name="Arrowsmith C."/>
            <person name="Jagels K."/>
            <person name="Moule S."/>
            <person name="Mungall K."/>
            <person name="Saunders M."/>
            <person name="Whitehead S."/>
            <person name="Chabalgoity J.A."/>
            <person name="Maskell D."/>
            <person name="Humphreys T."/>
            <person name="Roberts M."/>
            <person name="Barrow P.A."/>
            <person name="Dougan G."/>
            <person name="Parkhill J."/>
        </authorList>
    </citation>
    <scope>NUCLEOTIDE SEQUENCE [LARGE SCALE GENOMIC DNA]</scope>
    <source>
        <strain>287/91 / NCTC 13346</strain>
    </source>
</reference>
<organism>
    <name type="scientific">Salmonella gallinarum (strain 287/91 / NCTC 13346)</name>
    <dbReference type="NCBI Taxonomy" id="550538"/>
    <lineage>
        <taxon>Bacteria</taxon>
        <taxon>Pseudomonadati</taxon>
        <taxon>Pseudomonadota</taxon>
        <taxon>Gammaproteobacteria</taxon>
        <taxon>Enterobacterales</taxon>
        <taxon>Enterobacteriaceae</taxon>
        <taxon>Salmonella</taxon>
    </lineage>
</organism>
<sequence>MAALPDKEKLLRNFTRCANWEEKYLYIIELGQRLAELNPQDRNPQNTIHGCQSQVWIVMRRNANGIIELQGDSDAAIVKGLMAVVFILYHQMTAQDIVHFDVRPWFEKMALAQHLTPSRSQGLEAMIRAIRAKAATLS</sequence>
<evidence type="ECO:0000255" key="1">
    <source>
        <dbReference type="HAMAP-Rule" id="MF_01832"/>
    </source>
</evidence>
<gene>
    <name evidence="1" type="primary">sufE</name>
    <name type="ordered locus">SG1743</name>
</gene>
<accession>B5RAT3</accession>
<feature type="chain" id="PRO_1000188333" description="Cysteine desulfuration protein SufE">
    <location>
        <begin position="1"/>
        <end position="138"/>
    </location>
</feature>
<feature type="active site" description="Cysteine persulfide intermediate" evidence="1">
    <location>
        <position position="51"/>
    </location>
</feature>